<gene>
    <name type="primary">insD7</name>
    <name type="synonym">ybhB</name>
    <name type="synonym">yuaI</name>
    <name type="ordered locus">ECOK12F020</name>
</gene>
<dbReference type="EMBL" id="AP001918">
    <property type="protein sequence ID" value="BAA97890.1"/>
    <property type="molecule type" value="Genomic_DNA"/>
</dbReference>
<dbReference type="PIR" id="A64764">
    <property type="entry name" value="C65092"/>
</dbReference>
<dbReference type="RefSeq" id="NP_061399.1">
    <property type="nucleotide sequence ID" value="NC_002483.1"/>
</dbReference>
<dbReference type="SMR" id="P0CF59"/>
<dbReference type="KEGG" id="ecoc:C3026_00665"/>
<dbReference type="KEGG" id="ecoc:C3026_03835"/>
<dbReference type="KEGG" id="ecoc:C3026_06240"/>
<dbReference type="KEGG" id="ecoc:C3026_08175"/>
<dbReference type="KEGG" id="ecoc:C3026_11260"/>
<dbReference type="KEGG" id="ecoc:C3026_15300"/>
<dbReference type="KEGG" id="ecoc:C3026_15695"/>
<dbReference type="KEGG" id="ecoc:C3026_16630"/>
<dbReference type="KEGG" id="ecoc:C3026_23045"/>
<dbReference type="KEGG" id="ecoc:C3026_24215"/>
<dbReference type="PATRIC" id="fig|83333.103.peg.1121"/>
<dbReference type="OMA" id="CHDREAI"/>
<dbReference type="PhylomeDB" id="P0CF59"/>
<dbReference type="PRO" id="PR:P0CF59"/>
<dbReference type="GO" id="GO:0003677">
    <property type="term" value="F:DNA binding"/>
    <property type="evidence" value="ECO:0007669"/>
    <property type="project" value="UniProtKB-KW"/>
</dbReference>
<dbReference type="GO" id="GO:0015074">
    <property type="term" value="P:DNA integration"/>
    <property type="evidence" value="ECO:0007669"/>
    <property type="project" value="InterPro"/>
</dbReference>
<dbReference type="GO" id="GO:0006310">
    <property type="term" value="P:DNA recombination"/>
    <property type="evidence" value="ECO:0007669"/>
    <property type="project" value="UniProtKB-KW"/>
</dbReference>
<dbReference type="GO" id="GO:0032196">
    <property type="term" value="P:transposition"/>
    <property type="evidence" value="ECO:0007669"/>
    <property type="project" value="UniProtKB-KW"/>
</dbReference>
<dbReference type="Gene3D" id="3.30.420.10">
    <property type="entry name" value="Ribonuclease H-like superfamily/Ribonuclease H"/>
    <property type="match status" value="1"/>
</dbReference>
<dbReference type="InterPro" id="IPR025948">
    <property type="entry name" value="HTH-like_dom"/>
</dbReference>
<dbReference type="InterPro" id="IPR001584">
    <property type="entry name" value="Integrase_cat-core"/>
</dbReference>
<dbReference type="InterPro" id="IPR012337">
    <property type="entry name" value="RNaseH-like_sf"/>
</dbReference>
<dbReference type="InterPro" id="IPR036397">
    <property type="entry name" value="RNaseH_sf"/>
</dbReference>
<dbReference type="InterPro" id="IPR048020">
    <property type="entry name" value="Transpos_IS3"/>
</dbReference>
<dbReference type="NCBIfam" id="NF006918">
    <property type="entry name" value="PRK09409.1"/>
    <property type="match status" value="1"/>
</dbReference>
<dbReference type="NCBIfam" id="NF033516">
    <property type="entry name" value="transpos_IS3"/>
    <property type="match status" value="1"/>
</dbReference>
<dbReference type="PANTHER" id="PTHR37936">
    <property type="entry name" value="TRANSPOSASE INSC FOR INSERTION ELEMENT IS2A-RELATED"/>
    <property type="match status" value="1"/>
</dbReference>
<dbReference type="PANTHER" id="PTHR37936:SF3">
    <property type="entry name" value="TRANSPOSASE INSC FOR INSERTION ELEMENT IS2A-RELATED"/>
    <property type="match status" value="1"/>
</dbReference>
<dbReference type="Pfam" id="PF13276">
    <property type="entry name" value="HTH_21"/>
    <property type="match status" value="1"/>
</dbReference>
<dbReference type="Pfam" id="PF00665">
    <property type="entry name" value="rve"/>
    <property type="match status" value="1"/>
</dbReference>
<dbReference type="SUPFAM" id="SSF53098">
    <property type="entry name" value="Ribonuclease H-like"/>
    <property type="match status" value="1"/>
</dbReference>
<dbReference type="PROSITE" id="PS50994">
    <property type="entry name" value="INTEGRASE"/>
    <property type="match status" value="1"/>
</dbReference>
<organism>
    <name type="scientific">Escherichia coli (strain K12)</name>
    <dbReference type="NCBI Taxonomy" id="83333"/>
    <lineage>
        <taxon>Bacteria</taxon>
        <taxon>Pseudomonadati</taxon>
        <taxon>Pseudomonadota</taxon>
        <taxon>Gammaproteobacteria</taxon>
        <taxon>Enterobacterales</taxon>
        <taxon>Enterobacteriaceae</taxon>
        <taxon>Escherichia</taxon>
    </lineage>
</organism>
<geneLocation type="plasmid">
    <name>F</name>
</geneLocation>
<protein>
    <recommendedName>
        <fullName>Transposase InsD for insertion element IS2 on F plasmid</fullName>
    </recommendedName>
</protein>
<evidence type="ECO:0000255" key="1">
    <source>
        <dbReference type="PROSITE-ProRule" id="PRU00457"/>
    </source>
</evidence>
<reference key="1">
    <citation type="submission" date="2000-04" db="EMBL/GenBank/DDBJ databases">
        <title>Complete nucleotide sequence of the F plasmid: its implications for organization and diversification of plasmid genomes.</title>
        <authorList>
            <person name="Shimizu H."/>
            <person name="Saitoh Y."/>
            <person name="Suda Y."/>
            <person name="Uehara K."/>
            <person name="Sampei G."/>
            <person name="Mizobuchi K."/>
        </authorList>
    </citation>
    <scope>NUCLEOTIDE SEQUENCE [LARGE SCALE GENOMIC DNA]</scope>
    <source>
        <strain>K12 / CR63</strain>
        <plasmid>F</plasmid>
    </source>
</reference>
<keyword id="KW-0233">DNA recombination</keyword>
<keyword id="KW-0238">DNA-binding</keyword>
<keyword id="KW-0614">Plasmid</keyword>
<keyword id="KW-0814">Transposable element</keyword>
<keyword id="KW-0815">Transposition</keyword>
<sequence>MDSARALIARGWGVSLVSRCLRVSRAQLHVILRRTDDWMDGRRSRHTDDTDVLLRIHHVIGELPTYGYRRVWALLRRQAELDGMPAINAKRVYRIMRQNALLLERKPAVPPSKRAHTGRVAVKESNQRWCSDGFEFCCDNGERLRVTFALDCCDREALHWAVTTGGFNSETVQDVMLGAVERRFGNDLPSSPVEWLTDNGSCYRANETRQFARMLGLEPKNTAVRSPESNGIAESFVKTIKRDYISIMPKPDGLTAAKNLAEAFEHYNEWHPHSALGYRSPREYLRQRACNGLSDNRCLEI</sequence>
<feature type="chain" id="PRO_0000393578" description="Transposase InsD for insertion element IS2 on F plasmid">
    <location>
        <begin position="1"/>
        <end position="301"/>
    </location>
</feature>
<feature type="domain" description="Integrase catalytic" evidence="1">
    <location>
        <begin position="106"/>
        <end position="289"/>
    </location>
</feature>
<accession>P0CF59</accession>
<accession>P0C5W4</accession>
<accession>P19777</accession>
<accession>P76167</accession>
<accession>P76916</accession>
<accession>P77033</accession>
<accession>Q79EJ0</accession>
<proteinExistence type="predicted"/>
<name>INSD7_ECOLI</name>
<comment type="function">
    <text>Involved in the transposition of the insertion sequence IS2.</text>
</comment>